<proteinExistence type="inferred from homology"/>
<evidence type="ECO:0000255" key="1">
    <source>
        <dbReference type="HAMAP-Rule" id="MF_00502"/>
    </source>
</evidence>
<evidence type="ECO:0000305" key="2"/>
<sequence length="88" mass="9983">MKAGIHPDYHPVVFEDSSTGKRFLTRSTATSERTVEWTDGNTYPLLVVDVTADSHPFWTGAQRLLDTQGRVEKFNRKYGRRVRGGQEG</sequence>
<accession>Q5YPR6</accession>
<dbReference type="EMBL" id="AP006618">
    <property type="protein sequence ID" value="BAD59825.1"/>
    <property type="molecule type" value="Genomic_DNA"/>
</dbReference>
<dbReference type="RefSeq" id="WP_011211508.1">
    <property type="nucleotide sequence ID" value="NC_006361.1"/>
</dbReference>
<dbReference type="SMR" id="Q5YPR6"/>
<dbReference type="STRING" id="247156.NFA_49730"/>
<dbReference type="GeneID" id="61135558"/>
<dbReference type="KEGG" id="nfa:NFA_49730"/>
<dbReference type="eggNOG" id="COG0254">
    <property type="taxonomic scope" value="Bacteria"/>
</dbReference>
<dbReference type="HOGENOM" id="CLU_114306_2_2_11"/>
<dbReference type="OrthoDB" id="9803251at2"/>
<dbReference type="Proteomes" id="UP000006820">
    <property type="component" value="Chromosome"/>
</dbReference>
<dbReference type="GO" id="GO:1990904">
    <property type="term" value="C:ribonucleoprotein complex"/>
    <property type="evidence" value="ECO:0007669"/>
    <property type="project" value="UniProtKB-KW"/>
</dbReference>
<dbReference type="GO" id="GO:0005840">
    <property type="term" value="C:ribosome"/>
    <property type="evidence" value="ECO:0007669"/>
    <property type="project" value="UniProtKB-KW"/>
</dbReference>
<dbReference type="GO" id="GO:0003735">
    <property type="term" value="F:structural constituent of ribosome"/>
    <property type="evidence" value="ECO:0007669"/>
    <property type="project" value="InterPro"/>
</dbReference>
<dbReference type="GO" id="GO:0006412">
    <property type="term" value="P:translation"/>
    <property type="evidence" value="ECO:0007669"/>
    <property type="project" value="UniProtKB-UniRule"/>
</dbReference>
<dbReference type="Gene3D" id="4.10.830.30">
    <property type="entry name" value="Ribosomal protein L31"/>
    <property type="match status" value="1"/>
</dbReference>
<dbReference type="HAMAP" id="MF_00502">
    <property type="entry name" value="Ribosomal_bL31_2"/>
    <property type="match status" value="1"/>
</dbReference>
<dbReference type="InterPro" id="IPR034704">
    <property type="entry name" value="Ribosomal_bL28/bL31-like_sf"/>
</dbReference>
<dbReference type="InterPro" id="IPR002150">
    <property type="entry name" value="Ribosomal_bL31"/>
</dbReference>
<dbReference type="InterPro" id="IPR027493">
    <property type="entry name" value="Ribosomal_bL31_B"/>
</dbReference>
<dbReference type="InterPro" id="IPR042105">
    <property type="entry name" value="Ribosomal_bL31_sf"/>
</dbReference>
<dbReference type="NCBIfam" id="TIGR00105">
    <property type="entry name" value="L31"/>
    <property type="match status" value="1"/>
</dbReference>
<dbReference type="NCBIfam" id="NF002462">
    <property type="entry name" value="PRK01678.1"/>
    <property type="match status" value="1"/>
</dbReference>
<dbReference type="PANTHER" id="PTHR33280">
    <property type="entry name" value="50S RIBOSOMAL PROTEIN L31, CHLOROPLASTIC"/>
    <property type="match status" value="1"/>
</dbReference>
<dbReference type="PANTHER" id="PTHR33280:SF1">
    <property type="entry name" value="LARGE RIBOSOMAL SUBUNIT PROTEIN BL31C"/>
    <property type="match status" value="1"/>
</dbReference>
<dbReference type="Pfam" id="PF01197">
    <property type="entry name" value="Ribosomal_L31"/>
    <property type="match status" value="1"/>
</dbReference>
<dbReference type="PRINTS" id="PR01249">
    <property type="entry name" value="RIBOSOMALL31"/>
</dbReference>
<dbReference type="SUPFAM" id="SSF143800">
    <property type="entry name" value="L28p-like"/>
    <property type="match status" value="1"/>
</dbReference>
<dbReference type="PROSITE" id="PS01143">
    <property type="entry name" value="RIBOSOMAL_L31"/>
    <property type="match status" value="1"/>
</dbReference>
<comment type="subunit">
    <text evidence="1">Part of the 50S ribosomal subunit.</text>
</comment>
<comment type="similarity">
    <text evidence="1">Belongs to the bacterial ribosomal protein bL31 family. Type B subfamily.</text>
</comment>
<protein>
    <recommendedName>
        <fullName evidence="1">Large ribosomal subunit protein bL31B</fullName>
    </recommendedName>
    <alternativeName>
        <fullName evidence="2">50S ribosomal protein L31 type B</fullName>
    </alternativeName>
</protein>
<gene>
    <name evidence="1" type="primary">rpmE2</name>
    <name type="synonym">rpmE</name>
    <name type="ordered locus">NFA_49730</name>
</gene>
<reference key="1">
    <citation type="journal article" date="2004" name="Proc. Natl. Acad. Sci. U.S.A.">
        <title>The complete genomic sequence of Nocardia farcinica IFM 10152.</title>
        <authorList>
            <person name="Ishikawa J."/>
            <person name="Yamashita A."/>
            <person name="Mikami Y."/>
            <person name="Hoshino Y."/>
            <person name="Kurita H."/>
            <person name="Hotta K."/>
            <person name="Shiba T."/>
            <person name="Hattori M."/>
        </authorList>
    </citation>
    <scope>NUCLEOTIDE SEQUENCE [LARGE SCALE GENOMIC DNA]</scope>
    <source>
        <strain>IFM 10152</strain>
    </source>
</reference>
<keyword id="KW-1185">Reference proteome</keyword>
<keyword id="KW-0687">Ribonucleoprotein</keyword>
<keyword id="KW-0689">Ribosomal protein</keyword>
<feature type="chain" id="PRO_0000173241" description="Large ribosomal subunit protein bL31B">
    <location>
        <begin position="1"/>
        <end position="88"/>
    </location>
</feature>
<organism>
    <name type="scientific">Nocardia farcinica (strain IFM 10152)</name>
    <dbReference type="NCBI Taxonomy" id="247156"/>
    <lineage>
        <taxon>Bacteria</taxon>
        <taxon>Bacillati</taxon>
        <taxon>Actinomycetota</taxon>
        <taxon>Actinomycetes</taxon>
        <taxon>Mycobacteriales</taxon>
        <taxon>Nocardiaceae</taxon>
        <taxon>Nocardia</taxon>
    </lineage>
</organism>
<name>RL31B_NOCFA</name>